<name>RL6_BRUC2</name>
<sequence>MSRIGKKPVPVPAGVTASVEGQTVKAKGAKGELSFVVHDEVLVKMEDGAVRVDPRDQSKEARSKWGMSRTMISNIFVGVKDGFEKKLEISGVGYRAAMQGKNLQLSLGFSHEVVYDVPAGITVAVPKPTEIVVTGIDKQQVGQVAAEIREYRGPEPYKGKGVKYAGEKIVRKEGKKK</sequence>
<gene>
    <name evidence="1" type="primary">rplF</name>
    <name type="ordered locus">BCAN_A1241</name>
</gene>
<feature type="chain" id="PRO_1000087030" description="Large ribosomal subunit protein uL6">
    <location>
        <begin position="1"/>
        <end position="177"/>
    </location>
</feature>
<reference key="1">
    <citation type="submission" date="2007-10" db="EMBL/GenBank/DDBJ databases">
        <title>Brucella canis ATCC 23365 whole genome shotgun sequencing project.</title>
        <authorList>
            <person name="Setubal J.C."/>
            <person name="Bowns C."/>
            <person name="Boyle S."/>
            <person name="Crasta O.R."/>
            <person name="Czar M.J."/>
            <person name="Dharmanolla C."/>
            <person name="Gillespie J.J."/>
            <person name="Kenyon R.W."/>
            <person name="Lu J."/>
            <person name="Mane S."/>
            <person name="Mohapatra S."/>
            <person name="Nagrani S."/>
            <person name="Purkayastha A."/>
            <person name="Rajasimha H.K."/>
            <person name="Shallom J.M."/>
            <person name="Shallom S."/>
            <person name="Shukla M."/>
            <person name="Snyder E.E."/>
            <person name="Sobral B.W."/>
            <person name="Wattam A.R."/>
            <person name="Will R."/>
            <person name="Williams K."/>
            <person name="Yoo H."/>
            <person name="Bruce D."/>
            <person name="Detter C."/>
            <person name="Munk C."/>
            <person name="Brettin T.S."/>
        </authorList>
    </citation>
    <scope>NUCLEOTIDE SEQUENCE [LARGE SCALE GENOMIC DNA]</scope>
    <source>
        <strain>ATCC 23365 / NCTC 10854 / RM-666</strain>
    </source>
</reference>
<dbReference type="EMBL" id="CP000872">
    <property type="protein sequence ID" value="ABX62290.1"/>
    <property type="molecule type" value="Genomic_DNA"/>
</dbReference>
<dbReference type="RefSeq" id="WP_004683920.1">
    <property type="nucleotide sequence ID" value="NC_010103.1"/>
</dbReference>
<dbReference type="SMR" id="A9M5N5"/>
<dbReference type="GeneID" id="97533539"/>
<dbReference type="KEGG" id="bcs:BCAN_A1241"/>
<dbReference type="HOGENOM" id="CLU_065464_1_2_5"/>
<dbReference type="PhylomeDB" id="A9M5N5"/>
<dbReference type="Proteomes" id="UP000001385">
    <property type="component" value="Chromosome I"/>
</dbReference>
<dbReference type="GO" id="GO:0022625">
    <property type="term" value="C:cytosolic large ribosomal subunit"/>
    <property type="evidence" value="ECO:0007669"/>
    <property type="project" value="TreeGrafter"/>
</dbReference>
<dbReference type="GO" id="GO:0019843">
    <property type="term" value="F:rRNA binding"/>
    <property type="evidence" value="ECO:0007669"/>
    <property type="project" value="UniProtKB-UniRule"/>
</dbReference>
<dbReference type="GO" id="GO:0003735">
    <property type="term" value="F:structural constituent of ribosome"/>
    <property type="evidence" value="ECO:0007669"/>
    <property type="project" value="InterPro"/>
</dbReference>
<dbReference type="GO" id="GO:0002181">
    <property type="term" value="P:cytoplasmic translation"/>
    <property type="evidence" value="ECO:0007669"/>
    <property type="project" value="TreeGrafter"/>
</dbReference>
<dbReference type="FunFam" id="3.90.930.12:FF:000001">
    <property type="entry name" value="50S ribosomal protein L6"/>
    <property type="match status" value="1"/>
</dbReference>
<dbReference type="Gene3D" id="3.90.930.12">
    <property type="entry name" value="Ribosomal protein L6, alpha-beta domain"/>
    <property type="match status" value="2"/>
</dbReference>
<dbReference type="HAMAP" id="MF_01365_B">
    <property type="entry name" value="Ribosomal_uL6_B"/>
    <property type="match status" value="1"/>
</dbReference>
<dbReference type="InterPro" id="IPR000702">
    <property type="entry name" value="Ribosomal_uL6-like"/>
</dbReference>
<dbReference type="InterPro" id="IPR036789">
    <property type="entry name" value="Ribosomal_uL6-like_a/b-dom_sf"/>
</dbReference>
<dbReference type="InterPro" id="IPR020040">
    <property type="entry name" value="Ribosomal_uL6_a/b-dom"/>
</dbReference>
<dbReference type="InterPro" id="IPR019906">
    <property type="entry name" value="Ribosomal_uL6_bac-type"/>
</dbReference>
<dbReference type="InterPro" id="IPR002358">
    <property type="entry name" value="Ribosomal_uL6_CS"/>
</dbReference>
<dbReference type="NCBIfam" id="TIGR03654">
    <property type="entry name" value="L6_bact"/>
    <property type="match status" value="1"/>
</dbReference>
<dbReference type="PANTHER" id="PTHR11655">
    <property type="entry name" value="60S/50S RIBOSOMAL PROTEIN L6/L9"/>
    <property type="match status" value="1"/>
</dbReference>
<dbReference type="PANTHER" id="PTHR11655:SF14">
    <property type="entry name" value="LARGE RIBOSOMAL SUBUNIT PROTEIN UL6M"/>
    <property type="match status" value="1"/>
</dbReference>
<dbReference type="Pfam" id="PF00347">
    <property type="entry name" value="Ribosomal_L6"/>
    <property type="match status" value="2"/>
</dbReference>
<dbReference type="PIRSF" id="PIRSF002162">
    <property type="entry name" value="Ribosomal_L6"/>
    <property type="match status" value="1"/>
</dbReference>
<dbReference type="PRINTS" id="PR00059">
    <property type="entry name" value="RIBOSOMALL6"/>
</dbReference>
<dbReference type="SUPFAM" id="SSF56053">
    <property type="entry name" value="Ribosomal protein L6"/>
    <property type="match status" value="2"/>
</dbReference>
<dbReference type="PROSITE" id="PS00525">
    <property type="entry name" value="RIBOSOMAL_L6_1"/>
    <property type="match status" value="1"/>
</dbReference>
<proteinExistence type="inferred from homology"/>
<evidence type="ECO:0000255" key="1">
    <source>
        <dbReference type="HAMAP-Rule" id="MF_01365"/>
    </source>
</evidence>
<evidence type="ECO:0000305" key="2"/>
<comment type="function">
    <text evidence="1">This protein binds to the 23S rRNA, and is important in its secondary structure. It is located near the subunit interface in the base of the L7/L12 stalk, and near the tRNA binding site of the peptidyltransferase center.</text>
</comment>
<comment type="subunit">
    <text evidence="1">Part of the 50S ribosomal subunit.</text>
</comment>
<comment type="similarity">
    <text evidence="1">Belongs to the universal ribosomal protein uL6 family.</text>
</comment>
<accession>A9M5N5</accession>
<keyword id="KW-1185">Reference proteome</keyword>
<keyword id="KW-0687">Ribonucleoprotein</keyword>
<keyword id="KW-0689">Ribosomal protein</keyword>
<keyword id="KW-0694">RNA-binding</keyword>
<keyword id="KW-0699">rRNA-binding</keyword>
<protein>
    <recommendedName>
        <fullName evidence="1">Large ribosomal subunit protein uL6</fullName>
    </recommendedName>
    <alternativeName>
        <fullName evidence="2">50S ribosomal protein L6</fullName>
    </alternativeName>
</protein>
<organism>
    <name type="scientific">Brucella canis (strain ATCC 23365 / NCTC 10854 / RM-666)</name>
    <dbReference type="NCBI Taxonomy" id="483179"/>
    <lineage>
        <taxon>Bacteria</taxon>
        <taxon>Pseudomonadati</taxon>
        <taxon>Pseudomonadota</taxon>
        <taxon>Alphaproteobacteria</taxon>
        <taxon>Hyphomicrobiales</taxon>
        <taxon>Brucellaceae</taxon>
        <taxon>Brucella/Ochrobactrum group</taxon>
        <taxon>Brucella</taxon>
    </lineage>
</organism>